<sequence>MRHGIAHRKLNRTHSHRKAMLANMAASLIEHEQIVTTLPKAKELGPFVDKLITLAKRGDVHGRRQAMSKVRNEDQVKKLFDTLGGRYSERDGGYTRVLKAGFRHGDNAPMAVIELVDRDPSAKGAADRARLEEEGGMTEE</sequence>
<proteinExistence type="inferred from homology"/>
<gene>
    <name evidence="1" type="primary">rplQ</name>
    <name type="ordered locus">Mmar10_1770</name>
</gene>
<dbReference type="EMBL" id="CP000449">
    <property type="protein sequence ID" value="ABI66062.1"/>
    <property type="molecule type" value="Genomic_DNA"/>
</dbReference>
<dbReference type="RefSeq" id="WP_011643708.1">
    <property type="nucleotide sequence ID" value="NC_008347.1"/>
</dbReference>
<dbReference type="SMR" id="Q0ANS5"/>
<dbReference type="STRING" id="394221.Mmar10_1770"/>
<dbReference type="KEGG" id="mmr:Mmar10_1770"/>
<dbReference type="eggNOG" id="COG0203">
    <property type="taxonomic scope" value="Bacteria"/>
</dbReference>
<dbReference type="HOGENOM" id="CLU_074407_2_0_5"/>
<dbReference type="OrthoDB" id="9809073at2"/>
<dbReference type="Proteomes" id="UP000001964">
    <property type="component" value="Chromosome"/>
</dbReference>
<dbReference type="GO" id="GO:0022625">
    <property type="term" value="C:cytosolic large ribosomal subunit"/>
    <property type="evidence" value="ECO:0007669"/>
    <property type="project" value="TreeGrafter"/>
</dbReference>
<dbReference type="GO" id="GO:0003735">
    <property type="term" value="F:structural constituent of ribosome"/>
    <property type="evidence" value="ECO:0007669"/>
    <property type="project" value="InterPro"/>
</dbReference>
<dbReference type="GO" id="GO:0006412">
    <property type="term" value="P:translation"/>
    <property type="evidence" value="ECO:0007669"/>
    <property type="project" value="UniProtKB-UniRule"/>
</dbReference>
<dbReference type="FunFam" id="3.90.1030.10:FF:000001">
    <property type="entry name" value="50S ribosomal protein L17"/>
    <property type="match status" value="1"/>
</dbReference>
<dbReference type="Gene3D" id="3.90.1030.10">
    <property type="entry name" value="Ribosomal protein L17"/>
    <property type="match status" value="1"/>
</dbReference>
<dbReference type="HAMAP" id="MF_01368">
    <property type="entry name" value="Ribosomal_bL17"/>
    <property type="match status" value="1"/>
</dbReference>
<dbReference type="InterPro" id="IPR000456">
    <property type="entry name" value="Ribosomal_bL17"/>
</dbReference>
<dbReference type="InterPro" id="IPR047859">
    <property type="entry name" value="Ribosomal_bL17_CS"/>
</dbReference>
<dbReference type="InterPro" id="IPR036373">
    <property type="entry name" value="Ribosomal_bL17_sf"/>
</dbReference>
<dbReference type="NCBIfam" id="TIGR00059">
    <property type="entry name" value="L17"/>
    <property type="match status" value="1"/>
</dbReference>
<dbReference type="PANTHER" id="PTHR14413:SF16">
    <property type="entry name" value="LARGE RIBOSOMAL SUBUNIT PROTEIN BL17M"/>
    <property type="match status" value="1"/>
</dbReference>
<dbReference type="PANTHER" id="PTHR14413">
    <property type="entry name" value="RIBOSOMAL PROTEIN L17"/>
    <property type="match status" value="1"/>
</dbReference>
<dbReference type="Pfam" id="PF01196">
    <property type="entry name" value="Ribosomal_L17"/>
    <property type="match status" value="1"/>
</dbReference>
<dbReference type="SUPFAM" id="SSF64263">
    <property type="entry name" value="Prokaryotic ribosomal protein L17"/>
    <property type="match status" value="1"/>
</dbReference>
<dbReference type="PROSITE" id="PS01167">
    <property type="entry name" value="RIBOSOMAL_L17"/>
    <property type="match status" value="1"/>
</dbReference>
<evidence type="ECO:0000255" key="1">
    <source>
        <dbReference type="HAMAP-Rule" id="MF_01368"/>
    </source>
</evidence>
<evidence type="ECO:0000256" key="2">
    <source>
        <dbReference type="SAM" id="MobiDB-lite"/>
    </source>
</evidence>
<evidence type="ECO:0000305" key="3"/>
<keyword id="KW-1185">Reference proteome</keyword>
<keyword id="KW-0687">Ribonucleoprotein</keyword>
<keyword id="KW-0689">Ribosomal protein</keyword>
<reference key="1">
    <citation type="submission" date="2006-08" db="EMBL/GenBank/DDBJ databases">
        <title>Complete sequence of Maricaulis maris MCS10.</title>
        <authorList>
            <consortium name="US DOE Joint Genome Institute"/>
            <person name="Copeland A."/>
            <person name="Lucas S."/>
            <person name="Lapidus A."/>
            <person name="Barry K."/>
            <person name="Detter J.C."/>
            <person name="Glavina del Rio T."/>
            <person name="Hammon N."/>
            <person name="Israni S."/>
            <person name="Dalin E."/>
            <person name="Tice H."/>
            <person name="Pitluck S."/>
            <person name="Saunders E."/>
            <person name="Brettin T."/>
            <person name="Bruce D."/>
            <person name="Han C."/>
            <person name="Tapia R."/>
            <person name="Gilna P."/>
            <person name="Schmutz J."/>
            <person name="Larimer F."/>
            <person name="Land M."/>
            <person name="Hauser L."/>
            <person name="Kyrpides N."/>
            <person name="Mikhailova N."/>
            <person name="Viollier P."/>
            <person name="Stephens C."/>
            <person name="Richardson P."/>
        </authorList>
    </citation>
    <scope>NUCLEOTIDE SEQUENCE [LARGE SCALE GENOMIC DNA]</scope>
    <source>
        <strain>MCS10</strain>
    </source>
</reference>
<name>RL17_MARMM</name>
<organism>
    <name type="scientific">Maricaulis maris (strain MCS10)</name>
    <name type="common">Caulobacter maris</name>
    <dbReference type="NCBI Taxonomy" id="394221"/>
    <lineage>
        <taxon>Bacteria</taxon>
        <taxon>Pseudomonadati</taxon>
        <taxon>Pseudomonadota</taxon>
        <taxon>Alphaproteobacteria</taxon>
        <taxon>Maricaulales</taxon>
        <taxon>Maricaulaceae</taxon>
        <taxon>Maricaulis</taxon>
    </lineage>
</organism>
<accession>Q0ANS5</accession>
<comment type="subunit">
    <text evidence="1">Part of the 50S ribosomal subunit. Contacts protein L32.</text>
</comment>
<comment type="similarity">
    <text evidence="1">Belongs to the bacterial ribosomal protein bL17 family.</text>
</comment>
<feature type="chain" id="PRO_0000267891" description="Large ribosomal subunit protein bL17">
    <location>
        <begin position="1"/>
        <end position="140"/>
    </location>
</feature>
<feature type="region of interest" description="Disordered" evidence="2">
    <location>
        <begin position="119"/>
        <end position="140"/>
    </location>
</feature>
<feature type="compositionally biased region" description="Basic and acidic residues" evidence="2">
    <location>
        <begin position="119"/>
        <end position="133"/>
    </location>
</feature>
<protein>
    <recommendedName>
        <fullName evidence="1">Large ribosomal subunit protein bL17</fullName>
    </recommendedName>
    <alternativeName>
        <fullName evidence="3">50S ribosomal protein L17</fullName>
    </alternativeName>
</protein>